<protein>
    <recommendedName>
        <fullName evidence="1">Gamma-aminobutyraldehyde dehydrogenase</fullName>
        <shortName evidence="1">ABALDH</shortName>
        <ecNumber evidence="1">1.2.1.19</ecNumber>
    </recommendedName>
    <alternativeName>
        <fullName evidence="1">1-pyrroline dehydrogenase</fullName>
    </alternativeName>
    <alternativeName>
        <fullName evidence="1">4-aminobutanal dehydrogenase</fullName>
    </alternativeName>
    <alternativeName>
        <fullName evidence="1">5-aminopentanal dehydrogenase</fullName>
        <ecNumber evidence="1">1.2.1.-</ecNumber>
    </alternativeName>
</protein>
<organism>
    <name type="scientific">Escherichia coli O157:H7</name>
    <dbReference type="NCBI Taxonomy" id="83334"/>
    <lineage>
        <taxon>Bacteria</taxon>
        <taxon>Pseudomonadati</taxon>
        <taxon>Pseudomonadota</taxon>
        <taxon>Gammaproteobacteria</taxon>
        <taxon>Enterobacterales</taxon>
        <taxon>Enterobacteriaceae</taxon>
        <taxon>Escherichia</taxon>
    </lineage>
</organism>
<comment type="function">
    <text evidence="1">Catalyzes the oxidation 4-aminobutanal (gamma-aminobutyraldehyde) to 4-aminobutanoate (gamma-aminobutyrate or GABA). This is the second step in one of two pathways for putrescine degradation, where putrescine is converted into 4-aminobutanoate via 4-aminobutanal. Also functions as a 5-aminopentanal dehydrogenase in a a L-lysine degradation pathway to succinate that proceeds via cadaverine, glutarate and L-2-hydroxyglutarate.</text>
</comment>
<comment type="catalytic activity">
    <reaction evidence="1">
        <text>4-aminobutanal + NAD(+) + H2O = 4-aminobutanoate + NADH + 2 H(+)</text>
        <dbReference type="Rhea" id="RHEA:19105"/>
        <dbReference type="ChEBI" id="CHEBI:15377"/>
        <dbReference type="ChEBI" id="CHEBI:15378"/>
        <dbReference type="ChEBI" id="CHEBI:57540"/>
        <dbReference type="ChEBI" id="CHEBI:57945"/>
        <dbReference type="ChEBI" id="CHEBI:58264"/>
        <dbReference type="ChEBI" id="CHEBI:59888"/>
        <dbReference type="EC" id="1.2.1.19"/>
    </reaction>
    <physiologicalReaction direction="left-to-right" evidence="1">
        <dbReference type="Rhea" id="RHEA:19106"/>
    </physiologicalReaction>
</comment>
<comment type="catalytic activity">
    <reaction evidence="1">
        <text>5-aminopentanal + NAD(+) + H2O = 5-aminopentanoate + NADH + 2 H(+)</text>
        <dbReference type="Rhea" id="RHEA:61632"/>
        <dbReference type="ChEBI" id="CHEBI:15377"/>
        <dbReference type="ChEBI" id="CHEBI:15378"/>
        <dbReference type="ChEBI" id="CHEBI:57540"/>
        <dbReference type="ChEBI" id="CHEBI:57945"/>
        <dbReference type="ChEBI" id="CHEBI:144896"/>
        <dbReference type="ChEBI" id="CHEBI:356010"/>
    </reaction>
    <physiologicalReaction direction="left-to-right" evidence="1">
        <dbReference type="Rhea" id="RHEA:61633"/>
    </physiologicalReaction>
</comment>
<comment type="pathway">
    <text evidence="1">Amine and polyamine degradation; putrescine degradation; 4-aminobutanoate from 4-aminobutanal: step 1/1.</text>
</comment>
<comment type="pathway">
    <text evidence="1">Amino-acid degradation.</text>
</comment>
<comment type="subunit">
    <text evidence="1">Homotetramer.</text>
</comment>
<comment type="miscellaneous">
    <text evidence="1">4-aminobutanal can spontaneously cyclize to 1-pyrroline, and 5-aminopentanal to 1-piperideine.</text>
</comment>
<comment type="similarity">
    <text evidence="1">Belongs to the aldehyde dehydrogenase family. Gamma-aminobutyraldehyde dehydrogenase subfamily.</text>
</comment>
<name>ABDH_ECO57</name>
<proteinExistence type="inferred from homology"/>
<feature type="chain" id="PRO_0000269692" description="Gamma-aminobutyraldehyde dehydrogenase">
    <location>
        <begin position="1"/>
        <end position="474"/>
    </location>
</feature>
<feature type="active site" evidence="1">
    <location>
        <position position="246"/>
    </location>
</feature>
<feature type="active site" description="Nucleophile" evidence="1">
    <location>
        <position position="280"/>
    </location>
</feature>
<feature type="binding site" evidence="1">
    <location>
        <begin position="146"/>
        <end position="148"/>
    </location>
    <ligand>
        <name>NAD(+)</name>
        <dbReference type="ChEBI" id="CHEBI:57540"/>
    </ligand>
</feature>
<feature type="binding site" evidence="1">
    <location>
        <begin position="172"/>
        <end position="175"/>
    </location>
    <ligand>
        <name>NAD(+)</name>
        <dbReference type="ChEBI" id="CHEBI:57540"/>
    </ligand>
</feature>
<feature type="binding site" evidence="1">
    <location>
        <position position="209"/>
    </location>
    <ligand>
        <name>NAD(+)</name>
        <dbReference type="ChEBI" id="CHEBI:57540"/>
    </ligand>
</feature>
<feature type="binding site" evidence="1">
    <location>
        <begin position="225"/>
        <end position="228"/>
    </location>
    <ligand>
        <name>NAD(+)</name>
        <dbReference type="ChEBI" id="CHEBI:57540"/>
    </ligand>
</feature>
<feature type="binding site" evidence="1">
    <location>
        <position position="280"/>
    </location>
    <ligand>
        <name>NAD(+)</name>
        <dbReference type="ChEBI" id="CHEBI:57540"/>
    </ligand>
</feature>
<accession>Q8X9W5</accession>
<accession>Q7AE53</accession>
<evidence type="ECO:0000255" key="1">
    <source>
        <dbReference type="HAMAP-Rule" id="MF_01275"/>
    </source>
</evidence>
<dbReference type="EC" id="1.2.1.19" evidence="1"/>
<dbReference type="EC" id="1.2.1.-" evidence="1"/>
<dbReference type="EMBL" id="AE005174">
    <property type="protein sequence ID" value="AAG56331.1"/>
    <property type="molecule type" value="Genomic_DNA"/>
</dbReference>
<dbReference type="EMBL" id="BA000007">
    <property type="protein sequence ID" value="BAB35471.1"/>
    <property type="molecule type" value="Genomic_DNA"/>
</dbReference>
<dbReference type="PIR" id="G85733">
    <property type="entry name" value="G85733"/>
</dbReference>
<dbReference type="PIR" id="H90884">
    <property type="entry name" value="H90884"/>
</dbReference>
<dbReference type="RefSeq" id="NP_310075.1">
    <property type="nucleotide sequence ID" value="NC_002695.1"/>
</dbReference>
<dbReference type="RefSeq" id="WP_001163885.1">
    <property type="nucleotide sequence ID" value="NZ_VOAI01000022.1"/>
</dbReference>
<dbReference type="SMR" id="Q8X9W5"/>
<dbReference type="STRING" id="155864.Z2275"/>
<dbReference type="GeneID" id="917246"/>
<dbReference type="KEGG" id="ece:Z2275"/>
<dbReference type="KEGG" id="ecs:ECs_2048"/>
<dbReference type="PATRIC" id="fig|386585.9.peg.2148"/>
<dbReference type="eggNOG" id="COG1012">
    <property type="taxonomic scope" value="Bacteria"/>
</dbReference>
<dbReference type="HOGENOM" id="CLU_005391_0_0_6"/>
<dbReference type="OMA" id="VRHVMIK"/>
<dbReference type="UniPathway" id="UPA00188">
    <property type="reaction ID" value="UER00292"/>
</dbReference>
<dbReference type="Proteomes" id="UP000000558">
    <property type="component" value="Chromosome"/>
</dbReference>
<dbReference type="Proteomes" id="UP000002519">
    <property type="component" value="Chromosome"/>
</dbReference>
<dbReference type="GO" id="GO:0019145">
    <property type="term" value="F:aminobutyraldehyde dehydrogenase (NAD+) activity"/>
    <property type="evidence" value="ECO:0007669"/>
    <property type="project" value="UniProtKB-UniRule"/>
</dbReference>
<dbReference type="GO" id="GO:0051287">
    <property type="term" value="F:NAD binding"/>
    <property type="evidence" value="ECO:0007669"/>
    <property type="project" value="UniProtKB-UniRule"/>
</dbReference>
<dbReference type="GO" id="GO:0019477">
    <property type="term" value="P:L-lysine catabolic process"/>
    <property type="evidence" value="ECO:0007669"/>
    <property type="project" value="UniProtKB-UniRule"/>
</dbReference>
<dbReference type="GO" id="GO:0009447">
    <property type="term" value="P:putrescine catabolic process"/>
    <property type="evidence" value="ECO:0007669"/>
    <property type="project" value="UniProtKB-UniRule"/>
</dbReference>
<dbReference type="CDD" id="cd07092">
    <property type="entry name" value="ALDH_ABALDH-YdcW"/>
    <property type="match status" value="1"/>
</dbReference>
<dbReference type="FunFam" id="3.40.605.10:FF:000001">
    <property type="entry name" value="Aldehyde dehydrogenase 1"/>
    <property type="match status" value="1"/>
</dbReference>
<dbReference type="FunFam" id="3.40.309.10:FF:000010">
    <property type="entry name" value="Gamma-aminobutyraldehyde dehydrogenase"/>
    <property type="match status" value="1"/>
</dbReference>
<dbReference type="Gene3D" id="3.40.605.10">
    <property type="entry name" value="Aldehyde Dehydrogenase, Chain A, domain 1"/>
    <property type="match status" value="1"/>
</dbReference>
<dbReference type="Gene3D" id="3.40.309.10">
    <property type="entry name" value="Aldehyde Dehydrogenase, Chain A, domain 2"/>
    <property type="match status" value="1"/>
</dbReference>
<dbReference type="HAMAP" id="MF_01275">
    <property type="entry name" value="Aldedh_Prr"/>
    <property type="match status" value="1"/>
</dbReference>
<dbReference type="InterPro" id="IPR016161">
    <property type="entry name" value="Ald_DH/histidinol_DH"/>
</dbReference>
<dbReference type="InterPro" id="IPR016163">
    <property type="entry name" value="Ald_DH_C"/>
</dbReference>
<dbReference type="InterPro" id="IPR029510">
    <property type="entry name" value="Ald_DH_CS_GLU"/>
</dbReference>
<dbReference type="InterPro" id="IPR016162">
    <property type="entry name" value="Ald_DH_N"/>
</dbReference>
<dbReference type="InterPro" id="IPR015590">
    <property type="entry name" value="Aldehyde_DH_dom"/>
</dbReference>
<dbReference type="InterPro" id="IPR015657">
    <property type="entry name" value="Aminobutyraldehyde_DH"/>
</dbReference>
<dbReference type="InterPro" id="IPR017749">
    <property type="entry name" value="PatD"/>
</dbReference>
<dbReference type="NCBIfam" id="TIGR03374">
    <property type="entry name" value="ABALDH"/>
    <property type="match status" value="1"/>
</dbReference>
<dbReference type="NCBIfam" id="NF010000">
    <property type="entry name" value="PRK13473.1"/>
    <property type="match status" value="1"/>
</dbReference>
<dbReference type="PANTHER" id="PTHR11699">
    <property type="entry name" value="ALDEHYDE DEHYDROGENASE-RELATED"/>
    <property type="match status" value="1"/>
</dbReference>
<dbReference type="Pfam" id="PF00171">
    <property type="entry name" value="Aldedh"/>
    <property type="match status" value="1"/>
</dbReference>
<dbReference type="SUPFAM" id="SSF53720">
    <property type="entry name" value="ALDH-like"/>
    <property type="match status" value="1"/>
</dbReference>
<dbReference type="PROSITE" id="PS00687">
    <property type="entry name" value="ALDEHYDE_DEHYDR_GLU"/>
    <property type="match status" value="1"/>
</dbReference>
<gene>
    <name evidence="1" type="primary">patD</name>
    <name type="ordered locus">Z2275</name>
    <name type="ordered locus">ECs2048</name>
</gene>
<sequence>MQHKLLINGELVSGEGEKQPVYNPATGDVLLEIAEASAEQVDAAVRAADAAFAEWGQTTPKVRAECLLKLADVIEENGQVFAELESRNCGKPLHSAFNDEIPAIVDVFRFFAGAARCLNGLAAGEYLEGHTSMIRRDPLGVVASIAPWNYPLMMAAWKLAPALAAGNCVVLKPSEITPLTALKLAELAKDIFPAGVINVLFGRGKTVGDPLTGHPKVRMVSLTGSIATGEHIISHTAPSIKRTHMELGGKAPVIVFDDADIEAVVEGVRTFGYYNAGQDCTVACRIYAQKGIYDTLVEKLGAAVATLKSGAPDDESTELGPLSSLAHLERVSKAVEEAKATGHIKVITGGEKRKGNGYYYAPTLLAGALQDDAIVQKEVFGPVVSVTLFDNEEQVVNWANDSQYGLASSVWTKDVGRAHRVSARLQYGCTWVNTHFMLVSEMPHGGQKLSGYGKDMSLYGLEDYTVVRHVMVKH</sequence>
<reference key="1">
    <citation type="journal article" date="2001" name="Nature">
        <title>Genome sequence of enterohaemorrhagic Escherichia coli O157:H7.</title>
        <authorList>
            <person name="Perna N.T."/>
            <person name="Plunkett G. III"/>
            <person name="Burland V."/>
            <person name="Mau B."/>
            <person name="Glasner J.D."/>
            <person name="Rose D.J."/>
            <person name="Mayhew G.F."/>
            <person name="Evans P.S."/>
            <person name="Gregor J."/>
            <person name="Kirkpatrick H.A."/>
            <person name="Posfai G."/>
            <person name="Hackett J."/>
            <person name="Klink S."/>
            <person name="Boutin A."/>
            <person name="Shao Y."/>
            <person name="Miller L."/>
            <person name="Grotbeck E.J."/>
            <person name="Davis N.W."/>
            <person name="Lim A."/>
            <person name="Dimalanta E.T."/>
            <person name="Potamousis K."/>
            <person name="Apodaca J."/>
            <person name="Anantharaman T.S."/>
            <person name="Lin J."/>
            <person name="Yen G."/>
            <person name="Schwartz D.C."/>
            <person name="Welch R.A."/>
            <person name="Blattner F.R."/>
        </authorList>
    </citation>
    <scope>NUCLEOTIDE SEQUENCE [LARGE SCALE GENOMIC DNA]</scope>
    <source>
        <strain>O157:H7 / EDL933 / ATCC 700927 / EHEC</strain>
    </source>
</reference>
<reference key="2">
    <citation type="journal article" date="2001" name="DNA Res.">
        <title>Complete genome sequence of enterohemorrhagic Escherichia coli O157:H7 and genomic comparison with a laboratory strain K-12.</title>
        <authorList>
            <person name="Hayashi T."/>
            <person name="Makino K."/>
            <person name="Ohnishi M."/>
            <person name="Kurokawa K."/>
            <person name="Ishii K."/>
            <person name="Yokoyama K."/>
            <person name="Han C.-G."/>
            <person name="Ohtsubo E."/>
            <person name="Nakayama K."/>
            <person name="Murata T."/>
            <person name="Tanaka M."/>
            <person name="Tobe T."/>
            <person name="Iida T."/>
            <person name="Takami H."/>
            <person name="Honda T."/>
            <person name="Sasakawa C."/>
            <person name="Ogasawara N."/>
            <person name="Yasunaga T."/>
            <person name="Kuhara S."/>
            <person name="Shiba T."/>
            <person name="Hattori M."/>
            <person name="Shinagawa H."/>
        </authorList>
    </citation>
    <scope>NUCLEOTIDE SEQUENCE [LARGE SCALE GENOMIC DNA]</scope>
    <source>
        <strain>O157:H7 / Sakai / RIMD 0509952 / EHEC</strain>
    </source>
</reference>
<keyword id="KW-0520">NAD</keyword>
<keyword id="KW-0560">Oxidoreductase</keyword>
<keyword id="KW-1185">Reference proteome</keyword>